<gene>
    <name evidence="10" type="primary">dad5</name>
    <name evidence="6" type="synonym">hos3</name>
    <name evidence="10" type="synonym">hsk3</name>
    <name evidence="10" type="ORF">SPCC417.02</name>
</gene>
<proteinExistence type="evidence at protein level"/>
<protein>
    <recommendedName>
        <fullName evidence="10">DASH complex subunit DAD5</fullName>
    </recommendedName>
    <alternativeName>
        <fullName>High osmolarity sensitivity protein 3</fullName>
    </alternativeName>
</protein>
<accession>O94483</accession>
<name>HSK3_SCHPO</name>
<dbReference type="EMBL" id="AB044536">
    <property type="protein sequence ID" value="BAA96655.1"/>
    <property type="molecule type" value="mRNA"/>
</dbReference>
<dbReference type="EMBL" id="CU329672">
    <property type="protein sequence ID" value="CAA22648.1"/>
    <property type="molecule type" value="Genomic_DNA"/>
</dbReference>
<dbReference type="PIR" id="T41337">
    <property type="entry name" value="T41337"/>
</dbReference>
<dbReference type="RefSeq" id="NP_588279.1">
    <property type="nucleotide sequence ID" value="NM_001023269.2"/>
</dbReference>
<dbReference type="SMR" id="O94483"/>
<dbReference type="BioGRID" id="276070">
    <property type="interactions" value="8"/>
</dbReference>
<dbReference type="ComplexPortal" id="CPX-10081">
    <property type="entry name" value="DASH complex"/>
</dbReference>
<dbReference type="FunCoup" id="O94483">
    <property type="interactions" value="4"/>
</dbReference>
<dbReference type="STRING" id="284812.O94483"/>
<dbReference type="PaxDb" id="4896-SPCC417.02.1"/>
<dbReference type="EnsemblFungi" id="SPCC417.02.1">
    <property type="protein sequence ID" value="SPCC417.02.1:pep"/>
    <property type="gene ID" value="SPCC417.02"/>
</dbReference>
<dbReference type="GeneID" id="2539507"/>
<dbReference type="KEGG" id="spo:2539507"/>
<dbReference type="PomBase" id="SPCC417.02">
    <property type="gene designation" value="dad5"/>
</dbReference>
<dbReference type="VEuPathDB" id="FungiDB:SPCC417.02"/>
<dbReference type="eggNOG" id="ENOG502SGDH">
    <property type="taxonomic scope" value="Eukaryota"/>
</dbReference>
<dbReference type="HOGENOM" id="CLU_149439_1_0_1"/>
<dbReference type="InParanoid" id="O94483"/>
<dbReference type="OMA" id="GMFMAAS"/>
<dbReference type="PhylomeDB" id="O94483"/>
<dbReference type="PRO" id="PR:O94483"/>
<dbReference type="Proteomes" id="UP000002485">
    <property type="component" value="Chromosome III"/>
</dbReference>
<dbReference type="GO" id="GO:0005829">
    <property type="term" value="C:cytosol"/>
    <property type="evidence" value="ECO:0007005"/>
    <property type="project" value="PomBase"/>
</dbReference>
<dbReference type="GO" id="GO:0042729">
    <property type="term" value="C:DASH complex"/>
    <property type="evidence" value="ECO:0000314"/>
    <property type="project" value="PomBase"/>
</dbReference>
<dbReference type="GO" id="GO:0005634">
    <property type="term" value="C:nucleus"/>
    <property type="evidence" value="ECO:0007005"/>
    <property type="project" value="PomBase"/>
</dbReference>
<dbReference type="GO" id="GO:0005819">
    <property type="term" value="C:spindle"/>
    <property type="evidence" value="ECO:0007669"/>
    <property type="project" value="UniProtKB-SubCell"/>
</dbReference>
<dbReference type="GO" id="GO:0008608">
    <property type="term" value="P:attachment of spindle microtubules to kinetochore"/>
    <property type="evidence" value="ECO:0000250"/>
    <property type="project" value="UniProtKB"/>
</dbReference>
<dbReference type="GO" id="GO:0051301">
    <property type="term" value="P:cell division"/>
    <property type="evidence" value="ECO:0007669"/>
    <property type="project" value="UniProtKB-KW"/>
</dbReference>
<dbReference type="GO" id="GO:1990758">
    <property type="term" value="P:mitotic sister chromatid biorientation"/>
    <property type="evidence" value="ECO:0000269"/>
    <property type="project" value="UniProtKB"/>
</dbReference>
<dbReference type="GO" id="GO:1990976">
    <property type="term" value="P:protein transport along microtubule to mitotic spindle pole body"/>
    <property type="evidence" value="ECO:0000250"/>
    <property type="project" value="UniProtKB"/>
</dbReference>
<dbReference type="GO" id="GO:0051455">
    <property type="term" value="P:spindle attachment to meiosis I kinetochore"/>
    <property type="evidence" value="ECO:0000305"/>
    <property type="project" value="PomBase"/>
</dbReference>
<dbReference type="InterPro" id="IPR042332">
    <property type="entry name" value="Hsk3"/>
</dbReference>
<dbReference type="InterPro" id="IPR013183">
    <property type="entry name" value="Hsk3-like"/>
</dbReference>
<dbReference type="PANTHER" id="PTHR28289">
    <property type="entry name" value="DASH COMPLEX SUBUNIT HSK3"/>
    <property type="match status" value="1"/>
</dbReference>
<dbReference type="PANTHER" id="PTHR28289:SF1">
    <property type="entry name" value="DASH COMPLEX SUBUNIT HSK3"/>
    <property type="match status" value="1"/>
</dbReference>
<dbReference type="Pfam" id="PF08227">
    <property type="entry name" value="DASH_Hsk3"/>
    <property type="match status" value="1"/>
</dbReference>
<sequence>MRRSTIVPTSRTSSSSPSPSQMKSFQMNRLVDQLSKLQSNMSHLENHLHVTAIQAEAIRRLGALQASLLMASGRVMSEARIQKSSDAVEEDVPM</sequence>
<feature type="chain" id="PRO_0000084029" description="DASH complex subunit DAD5">
    <location>
        <begin position="1"/>
        <end position="94"/>
    </location>
</feature>
<feature type="region of interest" description="Disordered" evidence="2">
    <location>
        <begin position="1"/>
        <end position="25"/>
    </location>
</feature>
<feature type="compositionally biased region" description="Low complexity" evidence="2">
    <location>
        <begin position="1"/>
        <end position="20"/>
    </location>
</feature>
<keyword id="KW-0131">Cell cycle</keyword>
<keyword id="KW-0132">Cell division</keyword>
<keyword id="KW-0137">Centromere</keyword>
<keyword id="KW-0158">Chromosome</keyword>
<keyword id="KW-0963">Cytoplasm</keyword>
<keyword id="KW-0206">Cytoskeleton</keyword>
<keyword id="KW-0995">Kinetochore</keyword>
<keyword id="KW-0498">Mitosis</keyword>
<keyword id="KW-0539">Nucleus</keyword>
<keyword id="KW-1185">Reference proteome</keyword>
<organism>
    <name type="scientific">Schizosaccharomyces pombe (strain 972 / ATCC 24843)</name>
    <name type="common">Fission yeast</name>
    <dbReference type="NCBI Taxonomy" id="284812"/>
    <lineage>
        <taxon>Eukaryota</taxon>
        <taxon>Fungi</taxon>
        <taxon>Dikarya</taxon>
        <taxon>Ascomycota</taxon>
        <taxon>Taphrinomycotina</taxon>
        <taxon>Schizosaccharomycetes</taxon>
        <taxon>Schizosaccharomycetales</taxon>
        <taxon>Schizosaccharomycetaceae</taxon>
        <taxon>Schizosaccharomyces</taxon>
    </lineage>
</organism>
<reference key="1">
    <citation type="journal article" date="2000" name="Biosci. Biotechnol. Biochem.">
        <title>Identification and characterization of a novel gene, hos3+, the function of which is necessary for growth under high osmotic stress in fission yeast.</title>
        <authorList>
            <person name="Aoyama K."/>
            <person name="Kawaura R."/>
            <person name="Yamada H."/>
            <person name="Aiba H."/>
            <person name="Mizuno T."/>
        </authorList>
    </citation>
    <scope>NUCLEOTIDE SEQUENCE [MRNA]</scope>
    <scope>CHARACTERIZATION</scope>
</reference>
<reference key="2">
    <citation type="journal article" date="2002" name="Nature">
        <title>The genome sequence of Schizosaccharomyces pombe.</title>
        <authorList>
            <person name="Wood V."/>
            <person name="Gwilliam R."/>
            <person name="Rajandream M.A."/>
            <person name="Lyne M.H."/>
            <person name="Lyne R."/>
            <person name="Stewart A."/>
            <person name="Sgouros J.G."/>
            <person name="Peat N."/>
            <person name="Hayles J."/>
            <person name="Baker S.G."/>
            <person name="Basham D."/>
            <person name="Bowman S."/>
            <person name="Brooks K."/>
            <person name="Brown D."/>
            <person name="Brown S."/>
            <person name="Chillingworth T."/>
            <person name="Churcher C.M."/>
            <person name="Collins M."/>
            <person name="Connor R."/>
            <person name="Cronin A."/>
            <person name="Davis P."/>
            <person name="Feltwell T."/>
            <person name="Fraser A."/>
            <person name="Gentles S."/>
            <person name="Goble A."/>
            <person name="Hamlin N."/>
            <person name="Harris D.E."/>
            <person name="Hidalgo J."/>
            <person name="Hodgson G."/>
            <person name="Holroyd S."/>
            <person name="Hornsby T."/>
            <person name="Howarth S."/>
            <person name="Huckle E.J."/>
            <person name="Hunt S."/>
            <person name="Jagels K."/>
            <person name="James K.D."/>
            <person name="Jones L."/>
            <person name="Jones M."/>
            <person name="Leather S."/>
            <person name="McDonald S."/>
            <person name="McLean J."/>
            <person name="Mooney P."/>
            <person name="Moule S."/>
            <person name="Mungall K.L."/>
            <person name="Murphy L.D."/>
            <person name="Niblett D."/>
            <person name="Odell C."/>
            <person name="Oliver K."/>
            <person name="O'Neil S."/>
            <person name="Pearson D."/>
            <person name="Quail M.A."/>
            <person name="Rabbinowitsch E."/>
            <person name="Rutherford K.M."/>
            <person name="Rutter S."/>
            <person name="Saunders D."/>
            <person name="Seeger K."/>
            <person name="Sharp S."/>
            <person name="Skelton J."/>
            <person name="Simmonds M.N."/>
            <person name="Squares R."/>
            <person name="Squares S."/>
            <person name="Stevens K."/>
            <person name="Taylor K."/>
            <person name="Taylor R.G."/>
            <person name="Tivey A."/>
            <person name="Walsh S.V."/>
            <person name="Warren T."/>
            <person name="Whitehead S."/>
            <person name="Woodward J.R."/>
            <person name="Volckaert G."/>
            <person name="Aert R."/>
            <person name="Robben J."/>
            <person name="Grymonprez B."/>
            <person name="Weltjens I."/>
            <person name="Vanstreels E."/>
            <person name="Rieger M."/>
            <person name="Schaefer M."/>
            <person name="Mueller-Auer S."/>
            <person name="Gabel C."/>
            <person name="Fuchs M."/>
            <person name="Duesterhoeft A."/>
            <person name="Fritzc C."/>
            <person name="Holzer E."/>
            <person name="Moestl D."/>
            <person name="Hilbert H."/>
            <person name="Borzym K."/>
            <person name="Langer I."/>
            <person name="Beck A."/>
            <person name="Lehrach H."/>
            <person name="Reinhardt R."/>
            <person name="Pohl T.M."/>
            <person name="Eger P."/>
            <person name="Zimmermann W."/>
            <person name="Wedler H."/>
            <person name="Wambutt R."/>
            <person name="Purnelle B."/>
            <person name="Goffeau A."/>
            <person name="Cadieu E."/>
            <person name="Dreano S."/>
            <person name="Gloux S."/>
            <person name="Lelaure V."/>
            <person name="Mottier S."/>
            <person name="Galibert F."/>
            <person name="Aves S.J."/>
            <person name="Xiang Z."/>
            <person name="Hunt C."/>
            <person name="Moore K."/>
            <person name="Hurst S.M."/>
            <person name="Lucas M."/>
            <person name="Rochet M."/>
            <person name="Gaillardin C."/>
            <person name="Tallada V.A."/>
            <person name="Garzon A."/>
            <person name="Thode G."/>
            <person name="Daga R.R."/>
            <person name="Cruzado L."/>
            <person name="Jimenez J."/>
            <person name="Sanchez M."/>
            <person name="del Rey F."/>
            <person name="Benito J."/>
            <person name="Dominguez A."/>
            <person name="Revuelta J.L."/>
            <person name="Moreno S."/>
            <person name="Armstrong J."/>
            <person name="Forsburg S.L."/>
            <person name="Cerutti L."/>
            <person name="Lowe T."/>
            <person name="McCombie W.R."/>
            <person name="Paulsen I."/>
            <person name="Potashkin J."/>
            <person name="Shpakovski G.V."/>
            <person name="Ussery D."/>
            <person name="Barrell B.G."/>
            <person name="Nurse P."/>
        </authorList>
    </citation>
    <scope>NUCLEOTIDE SEQUENCE [LARGE SCALE GENOMIC DNA]</scope>
    <source>
        <strain>972 / ATCC 24843</strain>
    </source>
</reference>
<reference key="3">
    <citation type="journal article" date="2005" name="EMBO J.">
        <title>Molecular analysis of kinetochore architecture in fission yeast.</title>
        <authorList>
            <person name="Liu X."/>
            <person name="McLeod I."/>
            <person name="Anderson S."/>
            <person name="Yates J.R. III"/>
            <person name="He X."/>
        </authorList>
    </citation>
    <scope>FUNCTION</scope>
    <scope>IDENTIFICATION IN THE DASH COMPLEX</scope>
    <scope>SUBCELLULAR LOCATION</scope>
</reference>
<reference key="4">
    <citation type="journal article" date="2008" name="Mol. Biol. Cell">
        <title>Sister kinetochore recapture in fission yeast occurs by two distinct mechanisms, both requiring Dam1 and Klp2.</title>
        <authorList>
            <person name="Gachet Y."/>
            <person name="Reyes C."/>
            <person name="Courtheoux T."/>
            <person name="Goldstone S."/>
            <person name="Gay G."/>
            <person name="Serrurier C."/>
            <person name="Tournier S."/>
        </authorList>
    </citation>
    <scope>FUNCTION</scope>
</reference>
<reference key="5">
    <citation type="journal article" date="2010" name="Proc. Natl. Acad. Sci. U.S.A.">
        <title>A non-ring-like form of the Dam1 complex modulates microtubule dynamics in fission yeast.</title>
        <authorList>
            <person name="Gao Q."/>
            <person name="Courtheoux T."/>
            <person name="Gachet Y."/>
            <person name="Tournier S."/>
            <person name="He X."/>
        </authorList>
    </citation>
    <scope>FUNCTION</scope>
    <scope>SUBUNIT</scope>
    <scope>SUBCELLULAR LOCATION</scope>
</reference>
<comment type="function">
    <text evidence="3 4 5">Component of the DASH complex that connects microtubules with kinetochores and couples microtubule depolymerisation to chromosome movement; it is involved in retrieving kinetochores to the spindle poles before their re-orientation on the spindle in early mitosis and allows microtubule depolymerization to pull chromosomes apart and resist detachment during anaphase (PubMed:16079914, PubMed:20624975). Kinetochores, consisting of a centromere-associated inner segment and a microtubule-contacting outer segment, play a crucial role in chromosome segregation by mediating the physical connection between centromeric DNA and microtubules (PubMed:16079914, PubMed:20624975). Kinetochores also serve as an input point for the spindle assembly checkpoint, which delays anaphase until all chromosomes have bioriented on the mitotic spindle (PubMed:16079914). The DASH complex mediates bipolar kinetochore-microtubule attachments and facilitates the formation of additional interactions between outer kinetochore components and spindle microtubules (PubMed:16079914). During chromosome movement along the microtubule, it is required both for the sliding of kinetochores along the lateral side of the microtubule and also for microtubule end-on pulling on the kinetochore (PubMed:18256284). Modulates cytoplasmic microtubule dynamics by tracking the plus-end of shortening microtubules and slowing their depolymerization (PubMed:20624975).</text>
</comment>
<comment type="subunit">
    <text evidence="1 3 5">Component of the DASH complex consisting of ask1, dad1, dad2, dad3, dad4, dam1, duo1, dad5, spc19 and spc34, with a stoichiometry of one copy of each subunit per complex (PubMed:16079914). Multiple DASH complexes oligomerize to form a ring that encircles spindle microtubules and organizes the rod-like NDC80 complexes of the outer kinetochore (By similarity). DASH complex oligomerization strengthens microtubule attachments (By similarity). On cytoplasmic microtubules, DASH complexes appear to form patches instead of rings (PubMed:20624975).</text>
</comment>
<comment type="subcellular location">
    <subcellularLocation>
        <location evidence="8">Nucleus</location>
    </subcellularLocation>
    <subcellularLocation>
        <location evidence="8">Cytoplasm</location>
        <location evidence="8">Cytoskeleton</location>
        <location evidence="8">Spindle</location>
    </subcellularLocation>
    <subcellularLocation>
        <location evidence="8">Chromosome</location>
        <location evidence="8">Centromere</location>
        <location evidence="8">Kinetochore</location>
    </subcellularLocation>
    <subcellularLocation>
        <location evidence="9">Cytoplasm</location>
        <location evidence="9">Cytoskeleton</location>
    </subcellularLocation>
    <text evidence="9">Associates with the mitotic spindle and the kinetochore. In the cytoskeleton, localizes to cortical microtubules.</text>
</comment>
<comment type="similarity">
    <text evidence="7">Belongs to the DASH complex HSK3 family.</text>
</comment>
<evidence type="ECO:0000250" key="1">
    <source>
        <dbReference type="UniProtKB" id="P69852"/>
    </source>
</evidence>
<evidence type="ECO:0000256" key="2">
    <source>
        <dbReference type="SAM" id="MobiDB-lite"/>
    </source>
</evidence>
<evidence type="ECO:0000269" key="3">
    <source>
    </source>
</evidence>
<evidence type="ECO:0000269" key="4">
    <source>
    </source>
</evidence>
<evidence type="ECO:0000269" key="5">
    <source>
    </source>
</evidence>
<evidence type="ECO:0000303" key="6">
    <source>
    </source>
</evidence>
<evidence type="ECO:0000305" key="7"/>
<evidence type="ECO:0000305" key="8">
    <source>
    </source>
</evidence>
<evidence type="ECO:0000305" key="9">
    <source>
    </source>
</evidence>
<evidence type="ECO:0000312" key="10">
    <source>
        <dbReference type="PomBase" id="SPCC417.02"/>
    </source>
</evidence>